<comment type="miscellaneous">
    <text evidence="1">Primate-specific FAM90A gene family, thought to have arisen during multiple duplication and rearrangement events.</text>
</comment>
<comment type="similarity">
    <text evidence="3">Belongs to the FAM90 family.</text>
</comment>
<keyword id="KW-1185">Reference proteome</keyword>
<organism>
    <name type="scientific">Homo sapiens</name>
    <name type="common">Human</name>
    <dbReference type="NCBI Taxonomy" id="9606"/>
    <lineage>
        <taxon>Eukaryota</taxon>
        <taxon>Metazoa</taxon>
        <taxon>Chordata</taxon>
        <taxon>Craniata</taxon>
        <taxon>Vertebrata</taxon>
        <taxon>Euteleostomi</taxon>
        <taxon>Mammalia</taxon>
        <taxon>Eutheria</taxon>
        <taxon>Euarchontoglires</taxon>
        <taxon>Primates</taxon>
        <taxon>Haplorrhini</taxon>
        <taxon>Catarrhini</taxon>
        <taxon>Hominidae</taxon>
        <taxon>Homo</taxon>
    </lineage>
</organism>
<sequence length="464" mass="49829">MMARRDPTSWAKRLVRAQTLQKQRRAPVGPRAPPPDEEDPRLKCKNCGAFGHTARSTRCPMKCWKAALVPATLGKKEGKENLKPWKPRGEANPGPLNKDKGEKEERPRQQDPQRKALLHMFSGKPPEKPLPNGKGSTESSDYLRVASGPMPVHTTSKRPRLDPVLADRSATEMSGRGSVLASLSPLRKASLSSSSSLGPKERQTGAAADMPQPAVRHQGREPLLVVKPTHSRPEGGCREVPQAASKTHGLLQASRPQAQDKRPAVTPQPCPPAATHSLGLGSNLSFGPGAKRPAQAPIQACLNFPKKPRLGPFQIPESAIQGGELGAPENLQPPPAATELGPSTSPQMGRRTPAQVPSVDRQPPHSRPCLPTAQACTMSHHSAAGHDGAQPLRVLFRRLENGRWSSSLLAAPSFHSPEKPGAFLAQSPHVSEKSEAPCVRVPPSVLYEDLQVSSSSEDSDSDLE</sequence>
<reference key="1">
    <citation type="journal article" date="2006" name="Nature">
        <title>DNA sequence and analysis of human chromosome 8.</title>
        <authorList>
            <person name="Nusbaum C."/>
            <person name="Mikkelsen T.S."/>
            <person name="Zody M.C."/>
            <person name="Asakawa S."/>
            <person name="Taudien S."/>
            <person name="Garber M."/>
            <person name="Kodira C.D."/>
            <person name="Schueler M.G."/>
            <person name="Shimizu A."/>
            <person name="Whittaker C.A."/>
            <person name="Chang J.L."/>
            <person name="Cuomo C.A."/>
            <person name="Dewar K."/>
            <person name="FitzGerald M.G."/>
            <person name="Yang X."/>
            <person name="Allen N.R."/>
            <person name="Anderson S."/>
            <person name="Asakawa T."/>
            <person name="Blechschmidt K."/>
            <person name="Bloom T."/>
            <person name="Borowsky M.L."/>
            <person name="Butler J."/>
            <person name="Cook A."/>
            <person name="Corum B."/>
            <person name="DeArellano K."/>
            <person name="DeCaprio D."/>
            <person name="Dooley K.T."/>
            <person name="Dorris L. III"/>
            <person name="Engels R."/>
            <person name="Gloeckner G."/>
            <person name="Hafez N."/>
            <person name="Hagopian D.S."/>
            <person name="Hall J.L."/>
            <person name="Ishikawa S.K."/>
            <person name="Jaffe D.B."/>
            <person name="Kamat A."/>
            <person name="Kudoh J."/>
            <person name="Lehmann R."/>
            <person name="Lokitsang T."/>
            <person name="Macdonald P."/>
            <person name="Major J.E."/>
            <person name="Matthews C.D."/>
            <person name="Mauceli E."/>
            <person name="Menzel U."/>
            <person name="Mihalev A.H."/>
            <person name="Minoshima S."/>
            <person name="Murayama Y."/>
            <person name="Naylor J.W."/>
            <person name="Nicol R."/>
            <person name="Nguyen C."/>
            <person name="O'Leary S.B."/>
            <person name="O'Neill K."/>
            <person name="Parker S.C.J."/>
            <person name="Polley A."/>
            <person name="Raymond C.K."/>
            <person name="Reichwald K."/>
            <person name="Rodriguez J."/>
            <person name="Sasaki T."/>
            <person name="Schilhabel M."/>
            <person name="Siddiqui R."/>
            <person name="Smith C.L."/>
            <person name="Sneddon T.P."/>
            <person name="Talamas J.A."/>
            <person name="Tenzin P."/>
            <person name="Topham K."/>
            <person name="Venkataraman V."/>
            <person name="Wen G."/>
            <person name="Yamazaki S."/>
            <person name="Young S.K."/>
            <person name="Zeng Q."/>
            <person name="Zimmer A.R."/>
            <person name="Rosenthal A."/>
            <person name="Birren B.W."/>
            <person name="Platzer M."/>
            <person name="Shimizu N."/>
            <person name="Lander E.S."/>
        </authorList>
    </citation>
    <scope>NUCLEOTIDE SEQUENCE [LARGE SCALE GENOMIC DNA]</scope>
</reference>
<reference key="2">
    <citation type="journal article" date="2007" name="Hum. Mol. Genet.">
        <title>Characterization and evolution of the novel gene family FAM90A in primates originated by multiple duplication and rearrangement events.</title>
        <authorList>
            <person name="Bosch N."/>
            <person name="Caceres M."/>
            <person name="Cardone M.F."/>
            <person name="Carreras A."/>
            <person name="Ballana E."/>
            <person name="Rocchi M."/>
            <person name="Armengol L."/>
            <person name="Estivill X."/>
        </authorList>
    </citation>
    <scope>CHARACTERIZATION</scope>
</reference>
<dbReference type="EMBL" id="AC105233">
    <property type="status" value="NOT_ANNOTATED_CDS"/>
    <property type="molecule type" value="Genomic_DNA"/>
</dbReference>
<dbReference type="RefSeq" id="NP_001410459.1">
    <property type="nucleotide sequence ID" value="NM_001423530.1"/>
</dbReference>
<dbReference type="GlyGen" id="P0C7X0">
    <property type="glycosylation" value="2 sites, 1 O-linked glycan (1 site)"/>
</dbReference>
<dbReference type="BioMuta" id="HGNC:32272"/>
<dbReference type="DMDM" id="205831472"/>
<dbReference type="MassIVE" id="P0C7X0"/>
<dbReference type="Ensembl" id="ENST00000520792.6">
    <property type="protein sequence ID" value="ENSP00000514267.1"/>
    <property type="gene ID" value="ENSG00000215354.10"/>
</dbReference>
<dbReference type="GeneID" id="441332"/>
<dbReference type="MANE-Select" id="ENST00000520792.6">
    <property type="protein sequence ID" value="ENSP00000514267.1"/>
    <property type="RefSeq nucleotide sequence ID" value="NM_001423530.1"/>
    <property type="RefSeq protein sequence ID" value="NP_001410459.1"/>
</dbReference>
<dbReference type="AGR" id="HGNC:32272"/>
<dbReference type="GeneCards" id="FAM90A24"/>
<dbReference type="HGNC" id="HGNC:32272">
    <property type="gene designation" value="FAM90A24"/>
</dbReference>
<dbReference type="HPA" id="ENSG00000215354">
    <property type="expression patterns" value="Not detected"/>
</dbReference>
<dbReference type="neXtProt" id="NX_P0C7X0"/>
<dbReference type="OpenTargets" id="ENSG00000215354"/>
<dbReference type="GeneTree" id="ENSGT00910000144208"/>
<dbReference type="InParanoid" id="P0C7X0"/>
<dbReference type="PAN-GO" id="P0C7X0">
    <property type="GO annotations" value="0 GO annotations based on evolutionary models"/>
</dbReference>
<dbReference type="PhylomeDB" id="P0C7X0"/>
<dbReference type="Pharos" id="P0C7X0">
    <property type="development level" value="Tdark"/>
</dbReference>
<dbReference type="PRO" id="PR:P0C7X0"/>
<dbReference type="Proteomes" id="UP000005640">
    <property type="component" value="Chromosome 8"/>
</dbReference>
<dbReference type="RNAct" id="P0C7X0">
    <property type="molecule type" value="protein"/>
</dbReference>
<dbReference type="InterPro" id="IPR039213">
    <property type="entry name" value="FAM90"/>
</dbReference>
<dbReference type="InterPro" id="IPR041670">
    <property type="entry name" value="Znf-CCHC_6"/>
</dbReference>
<dbReference type="PANTHER" id="PTHR16035:SF14">
    <property type="entry name" value="FAMILY WITH SEQUENCE SIMILARITY 90 MEMBER A11, PSEUDOGENE-RELATED"/>
    <property type="match status" value="1"/>
</dbReference>
<dbReference type="PANTHER" id="PTHR16035">
    <property type="entry name" value="PROTEIN FAM90A1"/>
    <property type="match status" value="1"/>
</dbReference>
<dbReference type="Pfam" id="PF15288">
    <property type="entry name" value="zf-CCHC_6"/>
    <property type="match status" value="1"/>
</dbReference>
<gene>
    <name evidence="4" type="primary">FAM90A24</name>
    <name evidence="4" type="synonym">FAM90A24P</name>
</gene>
<protein>
    <recommendedName>
        <fullName>Protein FAM90A24</fullName>
    </recommendedName>
</protein>
<accession>P0C7X0</accession>
<accession>A8MWA1</accession>
<proteinExistence type="evidence at protein level"/>
<evidence type="ECO:0000250" key="1">
    <source>
        <dbReference type="UniProtKB" id="A6NIJ5"/>
    </source>
</evidence>
<evidence type="ECO:0000256" key="2">
    <source>
        <dbReference type="SAM" id="MobiDB-lite"/>
    </source>
</evidence>
<evidence type="ECO:0000305" key="3"/>
<evidence type="ECO:0000312" key="4">
    <source>
        <dbReference type="HGNC" id="HGNC:32272"/>
    </source>
</evidence>
<name>F90AO_HUMAN</name>
<feature type="chain" id="PRO_0000344623" description="Protein FAM90A24">
    <location>
        <begin position="1"/>
        <end position="464"/>
    </location>
</feature>
<feature type="region of interest" description="Disordered" evidence="2">
    <location>
        <begin position="1"/>
        <end position="42"/>
    </location>
</feature>
<feature type="region of interest" description="Disordered" evidence="2">
    <location>
        <begin position="69"/>
        <end position="389"/>
    </location>
</feature>
<feature type="region of interest" description="Disordered" evidence="2">
    <location>
        <begin position="415"/>
        <end position="437"/>
    </location>
</feature>
<feature type="compositionally biased region" description="Basic and acidic residues" evidence="2">
    <location>
        <begin position="74"/>
        <end position="89"/>
    </location>
</feature>
<feature type="compositionally biased region" description="Basic and acidic residues" evidence="2">
    <location>
        <begin position="97"/>
        <end position="114"/>
    </location>
</feature>
<feature type="compositionally biased region" description="Low complexity" evidence="2">
    <location>
        <begin position="180"/>
        <end position="197"/>
    </location>
</feature>